<reference key="1">
    <citation type="journal article" date="2007" name="J. Bacteriol.">
        <title>Genome-wide transcriptional changes in Streptococcus gordonii in response to competence signaling peptide.</title>
        <authorList>
            <person name="Vickerman M.M."/>
            <person name="Iobst S."/>
            <person name="Jesionowski A.M."/>
            <person name="Gill S.R."/>
        </authorList>
    </citation>
    <scope>NUCLEOTIDE SEQUENCE [LARGE SCALE GENOMIC DNA]</scope>
    <source>
        <strain>Challis / ATCC 35105 / BCRC 15272 / CH1 / DL1 / V288</strain>
    </source>
</reference>
<proteinExistence type="inferred from homology"/>
<feature type="chain" id="PRO_1000077121" description="5-methyltetrahydropteroyltriglutamate--homocysteine methyltransferase">
    <location>
        <begin position="1"/>
        <end position="750"/>
    </location>
</feature>
<feature type="active site" description="Proton donor" evidence="1">
    <location>
        <position position="689"/>
    </location>
</feature>
<feature type="binding site" evidence="1">
    <location>
        <begin position="15"/>
        <end position="18"/>
    </location>
    <ligand>
        <name>5-methyltetrahydropteroyltri-L-glutamate</name>
        <dbReference type="ChEBI" id="CHEBI:58207"/>
    </ligand>
</feature>
<feature type="binding site" evidence="1">
    <location>
        <position position="114"/>
    </location>
    <ligand>
        <name>5-methyltetrahydropteroyltri-L-glutamate</name>
        <dbReference type="ChEBI" id="CHEBI:58207"/>
    </ligand>
</feature>
<feature type="binding site" evidence="1">
    <location>
        <begin position="425"/>
        <end position="427"/>
    </location>
    <ligand>
        <name>L-homocysteine</name>
        <dbReference type="ChEBI" id="CHEBI:58199"/>
    </ligand>
</feature>
<feature type="binding site" evidence="1">
    <location>
        <begin position="425"/>
        <end position="427"/>
    </location>
    <ligand>
        <name>L-methionine</name>
        <dbReference type="ChEBI" id="CHEBI:57844"/>
    </ligand>
</feature>
<feature type="binding site" evidence="1">
    <location>
        <position position="478"/>
    </location>
    <ligand>
        <name>L-homocysteine</name>
        <dbReference type="ChEBI" id="CHEBI:58199"/>
    </ligand>
</feature>
<feature type="binding site" evidence="1">
    <location>
        <position position="478"/>
    </location>
    <ligand>
        <name>L-methionine</name>
        <dbReference type="ChEBI" id="CHEBI:57844"/>
    </ligand>
</feature>
<feature type="binding site" evidence="1">
    <location>
        <position position="555"/>
    </location>
    <ligand>
        <name>5-methyltetrahydropteroyltri-L-glutamate</name>
        <dbReference type="ChEBI" id="CHEBI:58207"/>
    </ligand>
</feature>
<feature type="binding site" evidence="1">
    <location>
        <position position="593"/>
    </location>
    <ligand>
        <name>L-homocysteine</name>
        <dbReference type="ChEBI" id="CHEBI:58199"/>
    </ligand>
</feature>
<feature type="binding site" evidence="1">
    <location>
        <position position="593"/>
    </location>
    <ligand>
        <name>L-methionine</name>
        <dbReference type="ChEBI" id="CHEBI:57844"/>
    </ligand>
</feature>
<feature type="binding site" evidence="1">
    <location>
        <position position="599"/>
    </location>
    <ligand>
        <name>5-methyltetrahydropteroyltri-L-glutamate</name>
        <dbReference type="ChEBI" id="CHEBI:58207"/>
    </ligand>
</feature>
<feature type="binding site" evidence="1">
    <location>
        <position position="636"/>
    </location>
    <ligand>
        <name>Zn(2+)</name>
        <dbReference type="ChEBI" id="CHEBI:29105"/>
        <note>catalytic</note>
    </ligand>
</feature>
<feature type="binding site" evidence="1">
    <location>
        <position position="638"/>
    </location>
    <ligand>
        <name>Zn(2+)</name>
        <dbReference type="ChEBI" id="CHEBI:29105"/>
        <note>catalytic</note>
    </ligand>
</feature>
<feature type="binding site" evidence="1">
    <location>
        <position position="660"/>
    </location>
    <ligand>
        <name>Zn(2+)</name>
        <dbReference type="ChEBI" id="CHEBI:29105"/>
        <note>catalytic</note>
    </ligand>
</feature>
<feature type="binding site" evidence="1">
    <location>
        <position position="721"/>
    </location>
    <ligand>
        <name>Zn(2+)</name>
        <dbReference type="ChEBI" id="CHEBI:29105"/>
        <note>catalytic</note>
    </ligand>
</feature>
<comment type="function">
    <text evidence="1">Catalyzes the transfer of a methyl group from 5-methyltetrahydrofolate to homocysteine resulting in methionine formation.</text>
</comment>
<comment type="catalytic activity">
    <reaction evidence="1">
        <text>5-methyltetrahydropteroyltri-L-glutamate + L-homocysteine = tetrahydropteroyltri-L-glutamate + L-methionine</text>
        <dbReference type="Rhea" id="RHEA:21196"/>
        <dbReference type="ChEBI" id="CHEBI:57844"/>
        <dbReference type="ChEBI" id="CHEBI:58140"/>
        <dbReference type="ChEBI" id="CHEBI:58199"/>
        <dbReference type="ChEBI" id="CHEBI:58207"/>
        <dbReference type="EC" id="2.1.1.14"/>
    </reaction>
</comment>
<comment type="cofactor">
    <cofactor evidence="1">
        <name>Zn(2+)</name>
        <dbReference type="ChEBI" id="CHEBI:29105"/>
    </cofactor>
    <text evidence="1">Binds 1 zinc ion per subunit.</text>
</comment>
<comment type="pathway">
    <text evidence="1">Amino-acid biosynthesis; L-methionine biosynthesis via de novo pathway; L-methionine from L-homocysteine (MetE route): step 1/1.</text>
</comment>
<comment type="similarity">
    <text evidence="1">Belongs to the vitamin-B12 independent methionine synthase family.</text>
</comment>
<gene>
    <name evidence="1" type="primary">metE</name>
    <name type="ordered locus">SGO_0310</name>
</gene>
<dbReference type="EC" id="2.1.1.14" evidence="1"/>
<dbReference type="EMBL" id="CP000725">
    <property type="protein sequence ID" value="ABV10872.1"/>
    <property type="molecule type" value="Genomic_DNA"/>
</dbReference>
<dbReference type="RefSeq" id="WP_011999838.1">
    <property type="nucleotide sequence ID" value="NC_009785.1"/>
</dbReference>
<dbReference type="SMR" id="A8AV19"/>
<dbReference type="STRING" id="467705.SGO_0310"/>
<dbReference type="KEGG" id="sgo:SGO_0310"/>
<dbReference type="eggNOG" id="COG0620">
    <property type="taxonomic scope" value="Bacteria"/>
</dbReference>
<dbReference type="HOGENOM" id="CLU_013175_0_0_9"/>
<dbReference type="UniPathway" id="UPA00051">
    <property type="reaction ID" value="UER00082"/>
</dbReference>
<dbReference type="Proteomes" id="UP000001131">
    <property type="component" value="Chromosome"/>
</dbReference>
<dbReference type="GO" id="GO:0003871">
    <property type="term" value="F:5-methyltetrahydropteroyltriglutamate-homocysteine S-methyltransferase activity"/>
    <property type="evidence" value="ECO:0007669"/>
    <property type="project" value="UniProtKB-UniRule"/>
</dbReference>
<dbReference type="GO" id="GO:0008270">
    <property type="term" value="F:zinc ion binding"/>
    <property type="evidence" value="ECO:0007669"/>
    <property type="project" value="InterPro"/>
</dbReference>
<dbReference type="GO" id="GO:0009086">
    <property type="term" value="P:methionine biosynthetic process"/>
    <property type="evidence" value="ECO:0007669"/>
    <property type="project" value="UniProtKB-UniRule"/>
</dbReference>
<dbReference type="GO" id="GO:0032259">
    <property type="term" value="P:methylation"/>
    <property type="evidence" value="ECO:0007669"/>
    <property type="project" value="UniProtKB-KW"/>
</dbReference>
<dbReference type="CDD" id="cd03311">
    <property type="entry name" value="CIMS_C_terminal_like"/>
    <property type="match status" value="1"/>
</dbReference>
<dbReference type="CDD" id="cd03312">
    <property type="entry name" value="CIMS_N_terminal_like"/>
    <property type="match status" value="1"/>
</dbReference>
<dbReference type="Gene3D" id="3.20.20.210">
    <property type="match status" value="2"/>
</dbReference>
<dbReference type="HAMAP" id="MF_00172">
    <property type="entry name" value="Meth_synth"/>
    <property type="match status" value="1"/>
</dbReference>
<dbReference type="InterPro" id="IPR013215">
    <property type="entry name" value="Cbl-indep_Met_Synth_N"/>
</dbReference>
<dbReference type="InterPro" id="IPR006276">
    <property type="entry name" value="Cobalamin-indep_Met_synthase"/>
</dbReference>
<dbReference type="InterPro" id="IPR002629">
    <property type="entry name" value="Met_Synth_C/arc"/>
</dbReference>
<dbReference type="InterPro" id="IPR038071">
    <property type="entry name" value="UROD/MetE-like_sf"/>
</dbReference>
<dbReference type="NCBIfam" id="TIGR01371">
    <property type="entry name" value="met_syn_B12ind"/>
    <property type="match status" value="1"/>
</dbReference>
<dbReference type="NCBIfam" id="NF003556">
    <property type="entry name" value="PRK05222.1"/>
    <property type="match status" value="1"/>
</dbReference>
<dbReference type="PANTHER" id="PTHR30519">
    <property type="entry name" value="5-METHYLTETRAHYDROPTEROYLTRIGLUTAMATE--HOMOCYSTEINE METHYLTRANSFERASE"/>
    <property type="match status" value="1"/>
</dbReference>
<dbReference type="Pfam" id="PF08267">
    <property type="entry name" value="Meth_synt_1"/>
    <property type="match status" value="1"/>
</dbReference>
<dbReference type="Pfam" id="PF01717">
    <property type="entry name" value="Meth_synt_2"/>
    <property type="match status" value="1"/>
</dbReference>
<dbReference type="PIRSF" id="PIRSF000382">
    <property type="entry name" value="MeTrfase_B12_ind"/>
    <property type="match status" value="1"/>
</dbReference>
<dbReference type="SUPFAM" id="SSF51726">
    <property type="entry name" value="UROD/MetE-like"/>
    <property type="match status" value="2"/>
</dbReference>
<keyword id="KW-0028">Amino-acid biosynthesis</keyword>
<keyword id="KW-0479">Metal-binding</keyword>
<keyword id="KW-0486">Methionine biosynthesis</keyword>
<keyword id="KW-0489">Methyltransferase</keyword>
<keyword id="KW-1185">Reference proteome</keyword>
<keyword id="KW-0677">Repeat</keyword>
<keyword id="KW-0808">Transferase</keyword>
<keyword id="KW-0862">Zinc</keyword>
<name>METE_STRGC</name>
<protein>
    <recommendedName>
        <fullName evidence="1">5-methyltetrahydropteroyltriglutamate--homocysteine methyltransferase</fullName>
        <ecNumber evidence="1">2.1.1.14</ecNumber>
    </recommendedName>
    <alternativeName>
        <fullName evidence="1">Cobalamin-independent methionine synthase</fullName>
    </alternativeName>
    <alternativeName>
        <fullName evidence="1">Methionine synthase, vitamin-B12 independent isozyme</fullName>
    </alternativeName>
</protein>
<evidence type="ECO:0000255" key="1">
    <source>
        <dbReference type="HAMAP-Rule" id="MF_00172"/>
    </source>
</evidence>
<sequence length="750" mass="84460">MSTTIIGFPRLGEFRELKFTTEKYFRKEISADELLAAAKELRAKHWNIVKEKGISEIPSNDFSHYDNVLDAAFLFNVVPSSVRGLELTDLERYFALARGYQGEKGDVRALPMKKWFNTNYHYIVPKFEKETQVKLAGHKIFEEFAEAKELGLVTRPVVVGPFTLLQVSDFEDGVAPADFVDALATAYQEVFAKLAELGAKRIQLDEPSLVKDLSAEEKALFLDLYKKLLADKKGLEVLIQTYFGDVRDIYSDLVQLPVDAIGLDFVEGKKTLELVKGGFPADKTLYAGIVNGKNIWRNNYEKSLAVLEQIPAENIVLTSSCSLLHVPFTTANEEFEPAILNHFAFAVEKLDEIRDLDAIRNGQGAEALAANKELFATERVGENAELRARIAGLTDADYTRLPAFAEREAIQEEAFKLPALPTTTIGSFPQTKEVRAKRLAFRKGELSAEDYDKFLAEQIDEWIKWQEEVGFDVLVHGEFERNDMVEYFGQNLSGYLFSKNGWVQSYGMRGVKPPIIWGDVTRLNPITVKWSSYAQSRTEKPVKGMLTGPVTILNWSFPREDISIKDSTLQIALAIKDEVLDLEAAGVKIIQIDEAALREKLPLRRSDWYEDYLDWAIPAFRLVHSTVAPDTQIHTHMCYSEFTDIIPAIDNMDADVISFEASRSNLEILDELKAKNFQTEVGPGVYDIHSPRVPNEGEIDHTIEAILAKVPSKKVWINPDCGLKTRGIPETKASLVRLVEAAKAARQHLK</sequence>
<accession>A8AV19</accession>
<organism>
    <name type="scientific">Streptococcus gordonii (strain Challis / ATCC 35105 / BCRC 15272 / CH1 / DL1 / V288)</name>
    <dbReference type="NCBI Taxonomy" id="467705"/>
    <lineage>
        <taxon>Bacteria</taxon>
        <taxon>Bacillati</taxon>
        <taxon>Bacillota</taxon>
        <taxon>Bacilli</taxon>
        <taxon>Lactobacillales</taxon>
        <taxon>Streptococcaceae</taxon>
        <taxon>Streptococcus</taxon>
    </lineage>
</organism>